<sequence>MKREEIADLMAFVVVAEERSFTRAAARLSMAQSALSQIVRRIEERLGLRLLTRTTRSVVPTEAGEHLLSVLGPMLHDIDSAMASLSDLQNRPSGTIRITTVEHAAKTILLPAMRTFLKSHPEIDIQLTIDYGLTDVVSERFDAGVRLGGEMDKDMIAIRIGPDIPMAIVGSPDYFSRRSVPTSVSQLIDHQAINLYLPTSGTANRWRLIRGGREVRVRMEGQLLLNTIDLIIDAAIDGHGLAYLPYDQVERAIKEKKLIRVLDKFTPDLPGYHLYYPHRRHAGSAFSLFIDRLKYKGAV</sequence>
<reference key="1">
    <citation type="journal article" date="1996" name="DNA Res.">
        <title>A 570-kb DNA sequence of the Escherichia coli K-12 genome corresponding to the 28.0-40.1 min region on the linkage map.</title>
        <authorList>
            <person name="Aiba H."/>
            <person name="Baba T."/>
            <person name="Fujita K."/>
            <person name="Hayashi K."/>
            <person name="Inada T."/>
            <person name="Isono K."/>
            <person name="Itoh T."/>
            <person name="Kasai H."/>
            <person name="Kashimoto K."/>
            <person name="Kimura S."/>
            <person name="Kitakawa M."/>
            <person name="Kitagawa M."/>
            <person name="Makino K."/>
            <person name="Miki T."/>
            <person name="Mizobuchi K."/>
            <person name="Mori H."/>
            <person name="Mori T."/>
            <person name="Motomura K."/>
            <person name="Nakade S."/>
            <person name="Nakamura Y."/>
            <person name="Nashimoto H."/>
            <person name="Nishio Y."/>
            <person name="Oshima T."/>
            <person name="Saito N."/>
            <person name="Sampei G."/>
            <person name="Seki Y."/>
            <person name="Sivasundaram S."/>
            <person name="Tagami H."/>
            <person name="Takeda J."/>
            <person name="Takemoto K."/>
            <person name="Takeuchi Y."/>
            <person name="Wada C."/>
            <person name="Yamamoto Y."/>
            <person name="Horiuchi T."/>
        </authorList>
    </citation>
    <scope>NUCLEOTIDE SEQUENCE [LARGE SCALE GENOMIC DNA]</scope>
    <source>
        <strain>K12 / W3110 / ATCC 27325 / DSM 5911</strain>
    </source>
</reference>
<reference key="2">
    <citation type="journal article" date="1997" name="Science">
        <title>The complete genome sequence of Escherichia coli K-12.</title>
        <authorList>
            <person name="Blattner F.R."/>
            <person name="Plunkett G. III"/>
            <person name="Bloch C.A."/>
            <person name="Perna N.T."/>
            <person name="Burland V."/>
            <person name="Riley M."/>
            <person name="Collado-Vides J."/>
            <person name="Glasner J.D."/>
            <person name="Rode C.K."/>
            <person name="Mayhew G.F."/>
            <person name="Gregor J."/>
            <person name="Davis N.W."/>
            <person name="Kirkpatrick H.A."/>
            <person name="Goeden M.A."/>
            <person name="Rose D.J."/>
            <person name="Mau B."/>
            <person name="Shao Y."/>
        </authorList>
    </citation>
    <scope>NUCLEOTIDE SEQUENCE [LARGE SCALE GENOMIC DNA]</scope>
    <source>
        <strain>K12 / MG1655 / ATCC 47076</strain>
    </source>
</reference>
<reference key="3">
    <citation type="journal article" date="2006" name="Mol. Syst. Biol.">
        <title>Highly accurate genome sequences of Escherichia coli K-12 strains MG1655 and W3110.</title>
        <authorList>
            <person name="Hayashi K."/>
            <person name="Morooka N."/>
            <person name="Yamamoto Y."/>
            <person name="Fujita K."/>
            <person name="Isono K."/>
            <person name="Choi S."/>
            <person name="Ohtsubo E."/>
            <person name="Baba T."/>
            <person name="Wanner B.L."/>
            <person name="Mori H."/>
            <person name="Horiuchi T."/>
        </authorList>
    </citation>
    <scope>NUCLEOTIDE SEQUENCE [LARGE SCALE GENOMIC DNA]</scope>
    <source>
        <strain>K12 / W3110 / ATCC 27325 / DSM 5911</strain>
    </source>
</reference>
<reference key="4">
    <citation type="journal article" date="2013" name="Genes Cells">
        <title>Novel regulator PgrR for switch control of peptidoglycan recycling in Escherichia coli.</title>
        <authorList>
            <person name="Shimada T."/>
            <person name="Yamazaki K."/>
            <person name="Ishihama A."/>
        </authorList>
    </citation>
    <scope>FUNCTION</scope>
    <scope>DNA-BINDING</scope>
    <scope>GENE NAME</scope>
</reference>
<organism>
    <name type="scientific">Escherichia coli (strain K12)</name>
    <dbReference type="NCBI Taxonomy" id="83333"/>
    <lineage>
        <taxon>Bacteria</taxon>
        <taxon>Pseudomonadati</taxon>
        <taxon>Pseudomonadota</taxon>
        <taxon>Gammaproteobacteria</taxon>
        <taxon>Enterobacterales</taxon>
        <taxon>Enterobacteriaceae</taxon>
        <taxon>Escherichia</taxon>
    </lineage>
</organism>
<comment type="function">
    <text evidence="2">Regulates the expression of genes involved in peptidoglycan (PG) degradation. Could play a role in switch control between recycling and degradation of PG peptides. Negatively regulates the expression of the ycjY-ymjD-ymjC-mpaA operon by binding to the PgrR-box. In addition, other genes are predicted to be under the control of PgrR, including genes related to membrane formation and function.</text>
</comment>
<comment type="similarity">
    <text evidence="3">Belongs to the LysR transcriptional regulatory family.</text>
</comment>
<gene>
    <name type="primary">pgrR</name>
    <name type="synonym">ycjZ</name>
    <name type="ordered locus">b1328</name>
    <name type="ordered locus">JW1321</name>
</gene>
<keyword id="KW-0238">DNA-binding</keyword>
<keyword id="KW-1185">Reference proteome</keyword>
<keyword id="KW-0678">Repressor</keyword>
<keyword id="KW-0804">Transcription</keyword>
<keyword id="KW-0805">Transcription regulation</keyword>
<feature type="chain" id="PRO_0000105782" description="HTH-type transcriptional regulator PgrR">
    <location>
        <begin position="1"/>
        <end position="299"/>
    </location>
</feature>
<feature type="domain" description="HTH lysR-type" evidence="1">
    <location>
        <begin position="4"/>
        <end position="61"/>
    </location>
</feature>
<feature type="DNA-binding region" description="H-T-H motif" evidence="1">
    <location>
        <begin position="21"/>
        <end position="40"/>
    </location>
</feature>
<dbReference type="EMBL" id="U00096">
    <property type="protein sequence ID" value="AAC74410.1"/>
    <property type="molecule type" value="Genomic_DNA"/>
</dbReference>
<dbReference type="EMBL" id="AP009048">
    <property type="protein sequence ID" value="BAA14921.1"/>
    <property type="molecule type" value="Genomic_DNA"/>
</dbReference>
<dbReference type="PIR" id="C64882">
    <property type="entry name" value="C64882"/>
</dbReference>
<dbReference type="RefSeq" id="NP_415844.1">
    <property type="nucleotide sequence ID" value="NC_000913.3"/>
</dbReference>
<dbReference type="RefSeq" id="WP_000817708.1">
    <property type="nucleotide sequence ID" value="NZ_SSZK01000012.1"/>
</dbReference>
<dbReference type="SMR" id="P77333"/>
<dbReference type="BioGRID" id="4260154">
    <property type="interactions" value="187"/>
</dbReference>
<dbReference type="DIP" id="DIP-11617N"/>
<dbReference type="FunCoup" id="P77333">
    <property type="interactions" value="35"/>
</dbReference>
<dbReference type="IntAct" id="P77333">
    <property type="interactions" value="7"/>
</dbReference>
<dbReference type="STRING" id="511145.b1328"/>
<dbReference type="PaxDb" id="511145-b1328"/>
<dbReference type="EnsemblBacteria" id="AAC74410">
    <property type="protein sequence ID" value="AAC74410"/>
    <property type="gene ID" value="b1328"/>
</dbReference>
<dbReference type="GeneID" id="945930"/>
<dbReference type="KEGG" id="ecj:JW1321"/>
<dbReference type="KEGG" id="eco:b1328"/>
<dbReference type="KEGG" id="ecoc:C3026_07775"/>
<dbReference type="PATRIC" id="fig|511145.12.peg.1386"/>
<dbReference type="EchoBASE" id="EB3682"/>
<dbReference type="eggNOG" id="COG0583">
    <property type="taxonomic scope" value="Bacteria"/>
</dbReference>
<dbReference type="HOGENOM" id="CLU_039613_16_1_6"/>
<dbReference type="InParanoid" id="P77333"/>
<dbReference type="OMA" id="KLGPMLH"/>
<dbReference type="OrthoDB" id="9813056at2"/>
<dbReference type="PhylomeDB" id="P77333"/>
<dbReference type="BioCyc" id="EcoCyc:G6664-MONOMER"/>
<dbReference type="PRO" id="PR:P77333"/>
<dbReference type="Proteomes" id="UP000000625">
    <property type="component" value="Chromosome"/>
</dbReference>
<dbReference type="GO" id="GO:0003677">
    <property type="term" value="F:DNA binding"/>
    <property type="evidence" value="ECO:0000314"/>
    <property type="project" value="EcoCyc"/>
</dbReference>
<dbReference type="GO" id="GO:0003700">
    <property type="term" value="F:DNA-binding transcription factor activity"/>
    <property type="evidence" value="ECO:0000318"/>
    <property type="project" value="GO_Central"/>
</dbReference>
<dbReference type="GO" id="GO:0043565">
    <property type="term" value="F:sequence-specific DNA binding"/>
    <property type="evidence" value="ECO:0000314"/>
    <property type="project" value="EcoCyc"/>
</dbReference>
<dbReference type="GO" id="GO:0071978">
    <property type="term" value="P:bacterial-type flagellum-dependent swarming motility"/>
    <property type="evidence" value="ECO:0000315"/>
    <property type="project" value="EcoCyc"/>
</dbReference>
<dbReference type="GO" id="GO:0006351">
    <property type="term" value="P:DNA-templated transcription"/>
    <property type="evidence" value="ECO:0000314"/>
    <property type="project" value="EcoCyc"/>
</dbReference>
<dbReference type="GO" id="GO:0045892">
    <property type="term" value="P:negative regulation of DNA-templated transcription"/>
    <property type="evidence" value="ECO:0000314"/>
    <property type="project" value="EcoCyc"/>
</dbReference>
<dbReference type="CDD" id="cd08474">
    <property type="entry name" value="PBP2_CrgA_like_5"/>
    <property type="match status" value="1"/>
</dbReference>
<dbReference type="FunFam" id="1.10.10.10:FF:000001">
    <property type="entry name" value="LysR family transcriptional regulator"/>
    <property type="match status" value="1"/>
</dbReference>
<dbReference type="FunFam" id="3.40.190.290:FF:000012">
    <property type="entry name" value="Transcriptional regulator, LysR family"/>
    <property type="match status" value="1"/>
</dbReference>
<dbReference type="Gene3D" id="3.40.190.290">
    <property type="match status" value="1"/>
</dbReference>
<dbReference type="Gene3D" id="1.10.10.10">
    <property type="entry name" value="Winged helix-like DNA-binding domain superfamily/Winged helix DNA-binding domain"/>
    <property type="match status" value="1"/>
</dbReference>
<dbReference type="InterPro" id="IPR005119">
    <property type="entry name" value="LysR_subst-bd"/>
</dbReference>
<dbReference type="InterPro" id="IPR000847">
    <property type="entry name" value="Tscrpt_reg_HTH_LysR"/>
</dbReference>
<dbReference type="InterPro" id="IPR036388">
    <property type="entry name" value="WH-like_DNA-bd_sf"/>
</dbReference>
<dbReference type="InterPro" id="IPR036390">
    <property type="entry name" value="WH_DNA-bd_sf"/>
</dbReference>
<dbReference type="PANTHER" id="PTHR30537">
    <property type="entry name" value="HTH-TYPE TRANSCRIPTIONAL REGULATOR"/>
    <property type="match status" value="1"/>
</dbReference>
<dbReference type="PANTHER" id="PTHR30537:SF1">
    <property type="entry name" value="HTH-TYPE TRANSCRIPTIONAL REGULATOR PGRR"/>
    <property type="match status" value="1"/>
</dbReference>
<dbReference type="Pfam" id="PF00126">
    <property type="entry name" value="HTH_1"/>
    <property type="match status" value="1"/>
</dbReference>
<dbReference type="Pfam" id="PF03466">
    <property type="entry name" value="LysR_substrate"/>
    <property type="match status" value="1"/>
</dbReference>
<dbReference type="PRINTS" id="PR00039">
    <property type="entry name" value="HTHLYSR"/>
</dbReference>
<dbReference type="SUPFAM" id="SSF53850">
    <property type="entry name" value="Periplasmic binding protein-like II"/>
    <property type="match status" value="1"/>
</dbReference>
<dbReference type="SUPFAM" id="SSF46785">
    <property type="entry name" value="Winged helix' DNA-binding domain"/>
    <property type="match status" value="1"/>
</dbReference>
<dbReference type="PROSITE" id="PS50931">
    <property type="entry name" value="HTH_LYSR"/>
    <property type="match status" value="1"/>
</dbReference>
<accession>P77333</accession>
<accession>P76841</accession>
<evidence type="ECO:0000255" key="1">
    <source>
        <dbReference type="PROSITE-ProRule" id="PRU00253"/>
    </source>
</evidence>
<evidence type="ECO:0000269" key="2">
    <source>
    </source>
</evidence>
<evidence type="ECO:0000305" key="3"/>
<name>PGRR_ECOLI</name>
<protein>
    <recommendedName>
        <fullName>HTH-type transcriptional regulator PgrR</fullName>
    </recommendedName>
    <alternativeName>
        <fullName>Regulator of PG recycling</fullName>
    </alternativeName>
</protein>
<proteinExistence type="evidence at protein level"/>